<gene>
    <name evidence="1" type="primary">lpxK</name>
    <name type="ordered locus">CHU_1804</name>
</gene>
<organism>
    <name type="scientific">Cytophaga hutchinsonii (strain ATCC 33406 / DSM 1761 / CIP 103989 / NBRC 15051 / NCIMB 9469 / D465)</name>
    <dbReference type="NCBI Taxonomy" id="269798"/>
    <lineage>
        <taxon>Bacteria</taxon>
        <taxon>Pseudomonadati</taxon>
        <taxon>Bacteroidota</taxon>
        <taxon>Cytophagia</taxon>
        <taxon>Cytophagales</taxon>
        <taxon>Cytophagaceae</taxon>
        <taxon>Cytophaga</taxon>
    </lineage>
</organism>
<comment type="function">
    <text evidence="1">Transfers the gamma-phosphate of ATP to the 4'-position of a tetraacyldisaccharide 1-phosphate intermediate (termed DS-1-P) to form tetraacyldisaccharide 1,4'-bis-phosphate (lipid IVA).</text>
</comment>
<comment type="catalytic activity">
    <reaction evidence="1">
        <text>a lipid A disaccharide + ATP = a lipid IVA + ADP + H(+)</text>
        <dbReference type="Rhea" id="RHEA:67840"/>
        <dbReference type="ChEBI" id="CHEBI:15378"/>
        <dbReference type="ChEBI" id="CHEBI:30616"/>
        <dbReference type="ChEBI" id="CHEBI:176343"/>
        <dbReference type="ChEBI" id="CHEBI:176425"/>
        <dbReference type="ChEBI" id="CHEBI:456216"/>
        <dbReference type="EC" id="2.7.1.130"/>
    </reaction>
</comment>
<comment type="pathway">
    <text evidence="1">Glycolipid biosynthesis; lipid IV(A) biosynthesis; lipid IV(A) from (3R)-3-hydroxytetradecanoyl-[acyl-carrier-protein] and UDP-N-acetyl-alpha-D-glucosamine: step 6/6.</text>
</comment>
<comment type="similarity">
    <text evidence="1">Belongs to the LpxK family.</text>
</comment>
<sequence length="351" mass="39670">MIFLKILLLPFSLLYGGITAIRNYAYDKGWYKSYTLPVAVVCVGNIKAGGTGKTPFTQLLLQQFAGKYKTAVLSRGYGRKTKGFVLATAASTSAEIGDEPLQLYTHAQGVYAVAVCEDRVAGVEKLLQLIPDLKLVILDDGFQHRRINRDVNILLTEYQAPFYADWVLPAGRLREFRNGATRADAVVVTKTPAHAALLKTDNILRHTAKAIPVLYTTIEYGATRNEDGNYTWQPNEKAVLVTGIANPQPLVQYLNSRHIDIIKQFEFKDHYSYTLRDIQQMLDYQNANDGVKIVMTEKDWVKVVPLLRELNLSKGWYYVPIQIGIYSDQQQLLNTVETKIIDRLNRLTQHT</sequence>
<feature type="chain" id="PRO_0000340829" description="Tetraacyldisaccharide 4'-kinase">
    <location>
        <begin position="1"/>
        <end position="351"/>
    </location>
</feature>
<feature type="binding site" evidence="1">
    <location>
        <begin position="47"/>
        <end position="54"/>
    </location>
    <ligand>
        <name>ATP</name>
        <dbReference type="ChEBI" id="CHEBI:30616"/>
    </ligand>
</feature>
<keyword id="KW-0067">ATP-binding</keyword>
<keyword id="KW-0418">Kinase</keyword>
<keyword id="KW-0441">Lipid A biosynthesis</keyword>
<keyword id="KW-0444">Lipid biosynthesis</keyword>
<keyword id="KW-0443">Lipid metabolism</keyword>
<keyword id="KW-0547">Nucleotide-binding</keyword>
<keyword id="KW-1185">Reference proteome</keyword>
<keyword id="KW-0808">Transferase</keyword>
<reference key="1">
    <citation type="journal article" date="2007" name="Appl. Environ. Microbiol.">
        <title>Genome sequence of the cellulolytic gliding bacterium Cytophaga hutchinsonii.</title>
        <authorList>
            <person name="Xie G."/>
            <person name="Bruce D.C."/>
            <person name="Challacombe J.F."/>
            <person name="Chertkov O."/>
            <person name="Detter J.C."/>
            <person name="Gilna P."/>
            <person name="Han C.S."/>
            <person name="Lucas S."/>
            <person name="Misra M."/>
            <person name="Myers G.L."/>
            <person name="Richardson P."/>
            <person name="Tapia R."/>
            <person name="Thayer N."/>
            <person name="Thompson L.S."/>
            <person name="Brettin T.S."/>
            <person name="Henrissat B."/>
            <person name="Wilson D.B."/>
            <person name="McBride M.J."/>
        </authorList>
    </citation>
    <scope>NUCLEOTIDE SEQUENCE [LARGE SCALE GENOMIC DNA]</scope>
    <source>
        <strain>ATCC 33406 / DSM 1761 / JCM 20678 / CIP 103989 / IAM 12607 / NBRC 15051 / NCIMB 9469 / D465</strain>
    </source>
</reference>
<dbReference type="EC" id="2.7.1.130" evidence="1"/>
<dbReference type="EMBL" id="CP000383">
    <property type="protein sequence ID" value="ABG59071.1"/>
    <property type="molecule type" value="Genomic_DNA"/>
</dbReference>
<dbReference type="SMR" id="Q11U43"/>
<dbReference type="STRING" id="269798.CHU_1804"/>
<dbReference type="KEGG" id="chu:CHU_1804"/>
<dbReference type="eggNOG" id="COG1663">
    <property type="taxonomic scope" value="Bacteria"/>
</dbReference>
<dbReference type="HOGENOM" id="CLU_038816_6_0_10"/>
<dbReference type="OrthoDB" id="9766423at2"/>
<dbReference type="UniPathway" id="UPA00359">
    <property type="reaction ID" value="UER00482"/>
</dbReference>
<dbReference type="Proteomes" id="UP000001822">
    <property type="component" value="Chromosome"/>
</dbReference>
<dbReference type="GO" id="GO:0005886">
    <property type="term" value="C:plasma membrane"/>
    <property type="evidence" value="ECO:0007669"/>
    <property type="project" value="TreeGrafter"/>
</dbReference>
<dbReference type="GO" id="GO:0005524">
    <property type="term" value="F:ATP binding"/>
    <property type="evidence" value="ECO:0007669"/>
    <property type="project" value="UniProtKB-UniRule"/>
</dbReference>
<dbReference type="GO" id="GO:0009029">
    <property type="term" value="F:tetraacyldisaccharide 4'-kinase activity"/>
    <property type="evidence" value="ECO:0007669"/>
    <property type="project" value="UniProtKB-UniRule"/>
</dbReference>
<dbReference type="GO" id="GO:0009245">
    <property type="term" value="P:lipid A biosynthetic process"/>
    <property type="evidence" value="ECO:0007669"/>
    <property type="project" value="UniProtKB-UniRule"/>
</dbReference>
<dbReference type="GO" id="GO:0009244">
    <property type="term" value="P:lipopolysaccharide core region biosynthetic process"/>
    <property type="evidence" value="ECO:0007669"/>
    <property type="project" value="TreeGrafter"/>
</dbReference>
<dbReference type="HAMAP" id="MF_00409">
    <property type="entry name" value="LpxK"/>
    <property type="match status" value="1"/>
</dbReference>
<dbReference type="InterPro" id="IPR003758">
    <property type="entry name" value="LpxK"/>
</dbReference>
<dbReference type="InterPro" id="IPR027417">
    <property type="entry name" value="P-loop_NTPase"/>
</dbReference>
<dbReference type="NCBIfam" id="TIGR00682">
    <property type="entry name" value="lpxK"/>
    <property type="match status" value="1"/>
</dbReference>
<dbReference type="PANTHER" id="PTHR42724">
    <property type="entry name" value="TETRAACYLDISACCHARIDE 4'-KINASE"/>
    <property type="match status" value="1"/>
</dbReference>
<dbReference type="PANTHER" id="PTHR42724:SF1">
    <property type="entry name" value="TETRAACYLDISACCHARIDE 4'-KINASE, MITOCHONDRIAL-RELATED"/>
    <property type="match status" value="1"/>
</dbReference>
<dbReference type="Pfam" id="PF02606">
    <property type="entry name" value="LpxK"/>
    <property type="match status" value="1"/>
</dbReference>
<dbReference type="SUPFAM" id="SSF52540">
    <property type="entry name" value="P-loop containing nucleoside triphosphate hydrolases"/>
    <property type="match status" value="1"/>
</dbReference>
<protein>
    <recommendedName>
        <fullName evidence="1">Tetraacyldisaccharide 4'-kinase</fullName>
        <ecNumber evidence="1">2.7.1.130</ecNumber>
    </recommendedName>
    <alternativeName>
        <fullName evidence="1">Lipid A 4'-kinase</fullName>
    </alternativeName>
</protein>
<accession>Q11U43</accession>
<name>LPXK_CYTH3</name>
<proteinExistence type="inferred from homology"/>
<evidence type="ECO:0000255" key="1">
    <source>
        <dbReference type="HAMAP-Rule" id="MF_00409"/>
    </source>
</evidence>